<proteinExistence type="evidence at protein level"/>
<name>ST2A1_RAT</name>
<comment type="function">
    <text evidence="1 3">Sulfotransferase that utilizes 3'-phospho-5'-adenylyl sulfate (PAPS) as sulfonate donor to catalyze the sulfonation of steroids and bile acids in the liver and adrenal glands (By similarity). Mediates the sulfation of a wide range of steroids and sterols, including pregnenolone, androsterone, DHEA, bile acids, cholesterol and as well many xenobiotics that contain alcohol and phenol functional groups (PubMed:7854148). Sulfonation increases the water solubility of most compounds, and therefore their renal excretion, but it can also result in bioactivation to form active metabolites. Plays an important role in maintening steroid and lipid homeostasis. Plays a key role in bile acid metabolism (By similarity). In addition, catalyzes the metabolic activation of potent carcinogenic polycyclic arylmethanols (PubMed:7854148).</text>
</comment>
<comment type="catalytic activity">
    <reaction evidence="1">
        <text>an alcohol + 3'-phosphoadenylyl sulfate = an alkyl sulfate + adenosine 3',5'-bisphosphate + H(+)</text>
        <dbReference type="Rhea" id="RHEA:22552"/>
        <dbReference type="ChEBI" id="CHEBI:15378"/>
        <dbReference type="ChEBI" id="CHEBI:30879"/>
        <dbReference type="ChEBI" id="CHEBI:58339"/>
        <dbReference type="ChEBI" id="CHEBI:58343"/>
        <dbReference type="ChEBI" id="CHEBI:83414"/>
        <dbReference type="EC" id="2.8.2.2"/>
    </reaction>
    <physiologicalReaction direction="left-to-right" evidence="1">
        <dbReference type="Rhea" id="RHEA:22553"/>
    </physiologicalReaction>
</comment>
<comment type="catalytic activity">
    <reaction evidence="1">
        <text>taurolithocholate + 3'-phosphoadenylyl sulfate = taurolithocholate 3-sulfate + adenosine 3',5'-bisphosphate + H(+)</text>
        <dbReference type="Rhea" id="RHEA:14013"/>
        <dbReference type="ChEBI" id="CHEBI:15378"/>
        <dbReference type="ChEBI" id="CHEBI:17179"/>
        <dbReference type="ChEBI" id="CHEBI:58301"/>
        <dbReference type="ChEBI" id="CHEBI:58339"/>
        <dbReference type="ChEBI" id="CHEBI:58343"/>
        <dbReference type="EC" id="2.8.2.14"/>
    </reaction>
    <physiologicalReaction direction="left-to-right" evidence="1">
        <dbReference type="Rhea" id="RHEA:14014"/>
    </physiologicalReaction>
</comment>
<comment type="catalytic activity">
    <reaction evidence="1">
        <text>lithocholate + 3'-phosphoadenylyl sulfate = lithocholate sulfate + adenosine 3',5'-bisphosphate + H(+)</text>
        <dbReference type="Rhea" id="RHEA:51064"/>
        <dbReference type="ChEBI" id="CHEBI:15378"/>
        <dbReference type="ChEBI" id="CHEBI:29744"/>
        <dbReference type="ChEBI" id="CHEBI:58339"/>
        <dbReference type="ChEBI" id="CHEBI:58343"/>
        <dbReference type="ChEBI" id="CHEBI:133940"/>
    </reaction>
    <physiologicalReaction direction="left-to-right" evidence="1">
        <dbReference type="Rhea" id="RHEA:51065"/>
    </physiologicalReaction>
</comment>
<comment type="catalytic activity">
    <reaction evidence="1">
        <text>(24S)-hydroxycholesterol + 3'-phosphoadenylyl sulfate = (24S)-hydroxycholesterol 24-sulfate + adenosine 3',5'-bisphosphate + H(+)</text>
        <dbReference type="Rhea" id="RHEA:52344"/>
        <dbReference type="ChEBI" id="CHEBI:15378"/>
        <dbReference type="ChEBI" id="CHEBI:34310"/>
        <dbReference type="ChEBI" id="CHEBI:58339"/>
        <dbReference type="ChEBI" id="CHEBI:58343"/>
        <dbReference type="ChEBI" id="CHEBI:136566"/>
    </reaction>
    <physiologicalReaction direction="left-to-right" evidence="1">
        <dbReference type="Rhea" id="RHEA:52345"/>
    </physiologicalReaction>
</comment>
<comment type="catalytic activity">
    <reaction evidence="1">
        <text>(24S)-hydroxycholesterol + 3'-phosphoadenylyl sulfate = (24S)-hydroxycholesterol 3-sulfate + adenosine 3',5'-bisphosphate + H(+)</text>
        <dbReference type="Rhea" id="RHEA:52348"/>
        <dbReference type="ChEBI" id="CHEBI:15378"/>
        <dbReference type="ChEBI" id="CHEBI:34310"/>
        <dbReference type="ChEBI" id="CHEBI:58339"/>
        <dbReference type="ChEBI" id="CHEBI:58343"/>
        <dbReference type="ChEBI" id="CHEBI:136567"/>
    </reaction>
    <physiologicalReaction direction="left-to-right" evidence="1">
        <dbReference type="Rhea" id="RHEA:52349"/>
    </physiologicalReaction>
</comment>
<comment type="catalytic activity">
    <reaction evidence="1">
        <text>(24S)-hydroxycholesterol 24-sulfate + 3'-phosphoadenylyl sulfate = (24S)-hydroxycholesterol 3,24-disulfate + adenosine 3',5'-bisphosphate + H(+)</text>
        <dbReference type="Rhea" id="RHEA:52352"/>
        <dbReference type="ChEBI" id="CHEBI:15378"/>
        <dbReference type="ChEBI" id="CHEBI:58339"/>
        <dbReference type="ChEBI" id="CHEBI:58343"/>
        <dbReference type="ChEBI" id="CHEBI:136566"/>
        <dbReference type="ChEBI" id="CHEBI:136568"/>
    </reaction>
    <physiologicalReaction direction="left-to-right" evidence="1">
        <dbReference type="Rhea" id="RHEA:52353"/>
    </physiologicalReaction>
</comment>
<comment type="catalytic activity">
    <reaction evidence="1">
        <text>3beta-hydroxyandrost-5-en-17-one + 3'-phosphoadenylyl sulfate = dehydroepiandrosterone 3-sulfate + adenosine 3',5'-bisphosphate + H(+)</text>
        <dbReference type="Rhea" id="RHEA:51216"/>
        <dbReference type="ChEBI" id="CHEBI:15378"/>
        <dbReference type="ChEBI" id="CHEBI:28689"/>
        <dbReference type="ChEBI" id="CHEBI:57905"/>
        <dbReference type="ChEBI" id="CHEBI:58339"/>
        <dbReference type="ChEBI" id="CHEBI:58343"/>
    </reaction>
    <physiologicalReaction direction="left-to-right" evidence="1">
        <dbReference type="Rhea" id="RHEA:51217"/>
    </physiologicalReaction>
</comment>
<comment type="catalytic activity">
    <reaction evidence="1">
        <text>pregnenolone + 3'-phosphoadenylyl sulfate = pregnenolone sulfate + adenosine 3',5'-bisphosphate + H(+)</text>
        <dbReference type="Rhea" id="RHEA:52356"/>
        <dbReference type="ChEBI" id="CHEBI:15378"/>
        <dbReference type="ChEBI" id="CHEBI:16581"/>
        <dbReference type="ChEBI" id="CHEBI:58339"/>
        <dbReference type="ChEBI" id="CHEBI:58343"/>
        <dbReference type="ChEBI" id="CHEBI:133000"/>
    </reaction>
    <physiologicalReaction direction="left-to-right" evidence="1">
        <dbReference type="Rhea" id="RHEA:52357"/>
    </physiologicalReaction>
</comment>
<comment type="catalytic activity">
    <reaction evidence="1">
        <text>androsterone + 3'-phosphoadenylyl sulfate = androsterone 3alpha-sulfate + adenosine 3',5'-bisphosphate + H(+)</text>
        <dbReference type="Rhea" id="RHEA:60644"/>
        <dbReference type="ChEBI" id="CHEBI:15378"/>
        <dbReference type="ChEBI" id="CHEBI:16032"/>
        <dbReference type="ChEBI" id="CHEBI:58339"/>
        <dbReference type="ChEBI" id="CHEBI:58343"/>
        <dbReference type="ChEBI" id="CHEBI:133003"/>
    </reaction>
    <physiologicalReaction direction="left-to-right" evidence="1">
        <dbReference type="Rhea" id="RHEA:60645"/>
    </physiologicalReaction>
</comment>
<comment type="subunit">
    <text evidence="1">Homodimer.</text>
</comment>
<comment type="subcellular location">
    <subcellularLocation>
        <location evidence="2">Cytoplasm</location>
    </subcellularLocation>
</comment>
<comment type="developmental stage">
    <text evidence="2">There is a marked sex difference (female &gt;&gt; male) in the expressed level of mRNA for this protein.</text>
</comment>
<comment type="induction">
    <text>Induced by estrogens and suppressed by androgens. Expression is under the influence of pituitary growth hormone and thyroid hormone.</text>
</comment>
<comment type="similarity">
    <text evidence="5">Belongs to the sulfotransferase 1 family.</text>
</comment>
<evidence type="ECO:0000250" key="1">
    <source>
        <dbReference type="UniProtKB" id="Q06520"/>
    </source>
</evidence>
<evidence type="ECO:0000269" key="2">
    <source>
    </source>
</evidence>
<evidence type="ECO:0000269" key="3">
    <source>
    </source>
</evidence>
<evidence type="ECO:0000303" key="4">
    <source>
    </source>
</evidence>
<evidence type="ECO:0000305" key="5"/>
<organism>
    <name type="scientific">Rattus norvegicus</name>
    <name type="common">Rat</name>
    <dbReference type="NCBI Taxonomy" id="10116"/>
    <lineage>
        <taxon>Eukaryota</taxon>
        <taxon>Metazoa</taxon>
        <taxon>Chordata</taxon>
        <taxon>Craniata</taxon>
        <taxon>Vertebrata</taxon>
        <taxon>Euteleostomi</taxon>
        <taxon>Mammalia</taxon>
        <taxon>Eutheria</taxon>
        <taxon>Euarchontoglires</taxon>
        <taxon>Glires</taxon>
        <taxon>Rodentia</taxon>
        <taxon>Myomorpha</taxon>
        <taxon>Muroidea</taxon>
        <taxon>Muridae</taxon>
        <taxon>Murinae</taxon>
        <taxon>Rattus</taxon>
    </lineage>
</organism>
<feature type="chain" id="PRO_0000085144" description="Sulfotransferase 2A1">
    <location>
        <begin position="1"/>
        <end position="284"/>
    </location>
</feature>
<feature type="active site" description="Proton acceptor" evidence="1">
    <location>
        <position position="98"/>
    </location>
</feature>
<feature type="binding site" evidence="1">
    <location>
        <position position="43"/>
    </location>
    <ligand>
        <name>3'-phosphoadenylyl sulfate</name>
        <dbReference type="ChEBI" id="CHEBI:58339"/>
    </ligand>
</feature>
<feature type="binding site" evidence="1">
    <location>
        <position position="44"/>
    </location>
    <ligand>
        <name>3'-phosphoadenylyl sulfate</name>
        <dbReference type="ChEBI" id="CHEBI:58339"/>
    </ligand>
</feature>
<feature type="binding site" evidence="1">
    <location>
        <position position="45"/>
    </location>
    <ligand>
        <name>3'-phosphoadenylyl sulfate</name>
        <dbReference type="ChEBI" id="CHEBI:58339"/>
    </ligand>
</feature>
<feature type="binding site" evidence="1">
    <location>
        <position position="46"/>
    </location>
    <ligand>
        <name>3'-phosphoadenylyl sulfate</name>
        <dbReference type="ChEBI" id="CHEBI:58339"/>
    </ligand>
</feature>
<feature type="binding site" evidence="1">
    <location>
        <position position="47"/>
    </location>
    <ligand>
        <name>3'-phosphoadenylyl sulfate</name>
        <dbReference type="ChEBI" id="CHEBI:58339"/>
    </ligand>
</feature>
<feature type="binding site" evidence="1">
    <location>
        <position position="48"/>
    </location>
    <ligand>
        <name>3'-phosphoadenylyl sulfate</name>
        <dbReference type="ChEBI" id="CHEBI:58339"/>
    </ligand>
</feature>
<feature type="binding site" evidence="1">
    <location>
        <position position="120"/>
    </location>
    <ligand>
        <name>3'-phosphoadenylyl sulfate</name>
        <dbReference type="ChEBI" id="CHEBI:58339"/>
    </ligand>
</feature>
<feature type="binding site" evidence="1">
    <location>
        <position position="128"/>
    </location>
    <ligand>
        <name>3'-phosphoadenylyl sulfate</name>
        <dbReference type="ChEBI" id="CHEBI:58339"/>
    </ligand>
</feature>
<feature type="binding site" evidence="1">
    <location>
        <position position="183"/>
    </location>
    <ligand>
        <name>3'-phosphoadenylyl sulfate</name>
        <dbReference type="ChEBI" id="CHEBI:58339"/>
    </ligand>
</feature>
<feature type="binding site" evidence="1">
    <location>
        <position position="217"/>
    </location>
    <ligand>
        <name>3'-phosphoadenylyl sulfate</name>
        <dbReference type="ChEBI" id="CHEBI:58339"/>
    </ligand>
</feature>
<feature type="binding site" evidence="1">
    <location>
        <position position="222"/>
    </location>
    <ligand>
        <name>3'-phosphoadenylyl sulfate</name>
        <dbReference type="ChEBI" id="CHEBI:58339"/>
    </ligand>
</feature>
<feature type="binding site" evidence="1">
    <location>
        <position position="246"/>
    </location>
    <ligand>
        <name>3'-phosphoadenylyl sulfate</name>
        <dbReference type="ChEBI" id="CHEBI:58339"/>
    </ligand>
</feature>
<feature type="binding site" evidence="1">
    <location>
        <position position="247"/>
    </location>
    <ligand>
        <name>3'-phosphoadenylyl sulfate</name>
        <dbReference type="ChEBI" id="CHEBI:58339"/>
    </ligand>
</feature>
<feature type="binding site" evidence="1">
    <location>
        <position position="248"/>
    </location>
    <ligand>
        <name>3'-phosphoadenylyl sulfate</name>
        <dbReference type="ChEBI" id="CHEBI:58339"/>
    </ligand>
</feature>
<feature type="sequence conflict" description="In Ref. 2; BAA03633/BAA03632." ref="2">
    <original>D</original>
    <variation>E</variation>
    <location>
        <position position="33"/>
    </location>
</feature>
<feature type="sequence conflict" description="In Ref. 1; AAA41356 and 2; BAA03633/BAA03632." evidence="5" ref="1 2">
    <original>LGYDM</original>
    <variation>VGYDI</variation>
    <location>
        <begin position="81"/>
        <end position="85"/>
    </location>
</feature>
<feature type="sequence conflict" description="In Ref. 1; AAA41356 and 2; BAA03633/BAA03632." evidence="5" ref="1 2">
    <original>I</original>
    <variation>M</variation>
    <location>
        <position position="95"/>
    </location>
</feature>
<feature type="sequence conflict" description="In Ref. 2; BAA03633/BAA03632." evidence="5" ref="2">
    <original>V</original>
    <variation>I</variation>
    <location>
        <position position="119"/>
    </location>
</feature>
<feature type="sequence conflict" description="In Ref. 2; BAA03633/BAA03632." evidence="5" ref="2">
    <original>A</original>
    <variation>V</variation>
    <location>
        <position position="139"/>
    </location>
</feature>
<feature type="sequence conflict" description="In Ref. 1; AAA41356." evidence="5" ref="1">
    <original>R</original>
    <variation>Q</variation>
    <location>
        <position position="173"/>
    </location>
</feature>
<feature type="sequence conflict" description="In Ref. 1; AAA41356." evidence="5" ref="1">
    <original>I</original>
    <variation>T</variation>
    <location>
        <position position="242"/>
    </location>
</feature>
<feature type="sequence conflict" description="In Ref. 2; BAA03633/BAA03632." evidence="5" ref="2">
    <original>V</original>
    <variation>I</variation>
    <location>
        <position position="250"/>
    </location>
</feature>
<gene>
    <name type="primary">Sult2a1</name>
    <name type="synonym">St2a1</name>
</gene>
<sequence>MPDYTWFEGIPFHAFGISKETLQNVCNKFVVKDEDLILLAYPKSGTNWLIEIVCLIQTKGDPKWIQSVTIWDRSPWIETDLGYDMLIKKKGPRLITSHLPMHLFSKSLFSSKAKVIYLVRNPRDVLVSGYYFWGNSTLAKKPDSLGTYVEWFLKGNVLYGSWFEHIRAWLSMREWDNFLLLYYEDMKKDTMGTIKKICDFLGKKLEPDELDLVLKYSSFQVMKENDMSNYSLLMKKSIFTGIGLMRKGTVGDWKNHFTVSQAEAFDKVFQEKMAGFPPGMFPWE</sequence>
<keyword id="KW-0963">Cytoplasm</keyword>
<keyword id="KW-0443">Lipid metabolism</keyword>
<keyword id="KW-1185">Reference proteome</keyword>
<keyword id="KW-0753">Steroid metabolism</keyword>
<keyword id="KW-0808">Transferase</keyword>
<protein>
    <recommendedName>
        <fullName>Sulfotransferase 2A1</fullName>
        <shortName>ST2A1</shortName>
        <ecNumber evidence="1">2.8.2.2</ecNumber>
    </recommendedName>
    <alternativeName>
        <fullName>Bile salt sulfotransferase</fullName>
        <ecNumber evidence="1">2.8.2.14</ecNumber>
    </alternativeName>
    <alternativeName>
        <fullName evidence="4">Hydroxysteroid sulfotransferase</fullName>
        <shortName evidence="4">ST</shortName>
    </alternativeName>
    <alternativeName>
        <fullName>ST-20</fullName>
    </alternativeName>
</protein>
<accession>P15709</accession>
<accession>A0A0G2JYC0</accession>
<reference key="1">
    <citation type="journal article" date="1989" name="Biochem. Biophys. Res. Commun.">
        <title>Cloning and sequence analysis of a rat liver cDNA encoding hydroxysteroid sulfotransferase.</title>
        <authorList>
            <person name="Ogura K."/>
            <person name="Kajita J."/>
            <person name="Narihata H."/>
            <person name="Watabe T."/>
            <person name="Ozawa S."/>
            <person name="Nagata K."/>
            <person name="Yamazoe Y."/>
            <person name="Kato R."/>
        </authorList>
    </citation>
    <scope>NUCLEOTIDE SEQUENCE [MRNA]</scope>
    <scope>DEVELOPMENTAL STAGE</scope>
    <scope>SUBCELLULAR LOCATION</scope>
    <source>
        <strain>Sprague-Dawley</strain>
        <tissue>Liver</tissue>
    </source>
</reference>
<reference key="2">
    <citation type="journal article" date="1994" name="Chem. Biol. Interact.">
        <title>Molecular cloning and functions of rat liver hydroxysteroid sulfotransferases catalysing covalent binding of carcinogenic polycyclic arylmethanols to DNA.</title>
        <authorList>
            <person name="Watabe T."/>
            <person name="Ogura K."/>
            <person name="Satsukawa M."/>
            <person name="Okuda H."/>
            <person name="Hiratsuka A."/>
        </authorList>
    </citation>
    <scope>NUCLEOTIDE SEQUENCE [MRNA]</scope>
    <source>
        <strain>Sprague-Dawley</strain>
        <tissue>Liver</tissue>
    </source>
</reference>
<reference key="3">
    <citation type="journal article" date="2004" name="Nature">
        <title>Genome sequence of the Brown Norway rat yields insights into mammalian evolution.</title>
        <authorList>
            <person name="Gibbs R.A."/>
            <person name="Weinstock G.M."/>
            <person name="Metzker M.L."/>
            <person name="Muzny D.M."/>
            <person name="Sodergren E.J."/>
            <person name="Scherer S."/>
            <person name="Scott G."/>
            <person name="Steffen D."/>
            <person name="Worley K.C."/>
            <person name="Burch P.E."/>
            <person name="Okwuonu G."/>
            <person name="Hines S."/>
            <person name="Lewis L."/>
            <person name="Deramo C."/>
            <person name="Delgado O."/>
            <person name="Dugan-Rocha S."/>
            <person name="Miner G."/>
            <person name="Morgan M."/>
            <person name="Hawes A."/>
            <person name="Gill R."/>
            <person name="Holt R.A."/>
            <person name="Adams M.D."/>
            <person name="Amanatides P.G."/>
            <person name="Baden-Tillson H."/>
            <person name="Barnstead M."/>
            <person name="Chin S."/>
            <person name="Evans C.A."/>
            <person name="Ferriera S."/>
            <person name="Fosler C."/>
            <person name="Glodek A."/>
            <person name="Gu Z."/>
            <person name="Jennings D."/>
            <person name="Kraft C.L."/>
            <person name="Nguyen T."/>
            <person name="Pfannkoch C.M."/>
            <person name="Sitter C."/>
            <person name="Sutton G.G."/>
            <person name="Venter J.C."/>
            <person name="Woodage T."/>
            <person name="Smith D."/>
            <person name="Lee H.-M."/>
            <person name="Gustafson E."/>
            <person name="Cahill P."/>
            <person name="Kana A."/>
            <person name="Doucette-Stamm L."/>
            <person name="Weinstock K."/>
            <person name="Fechtel K."/>
            <person name="Weiss R.B."/>
            <person name="Dunn D.M."/>
            <person name="Green E.D."/>
            <person name="Blakesley R.W."/>
            <person name="Bouffard G.G."/>
            <person name="De Jong P.J."/>
            <person name="Osoegawa K."/>
            <person name="Zhu B."/>
            <person name="Marra M."/>
            <person name="Schein J."/>
            <person name="Bosdet I."/>
            <person name="Fjell C."/>
            <person name="Jones S."/>
            <person name="Krzywinski M."/>
            <person name="Mathewson C."/>
            <person name="Siddiqui A."/>
            <person name="Wye N."/>
            <person name="McPherson J."/>
            <person name="Zhao S."/>
            <person name="Fraser C.M."/>
            <person name="Shetty J."/>
            <person name="Shatsman S."/>
            <person name="Geer K."/>
            <person name="Chen Y."/>
            <person name="Abramzon S."/>
            <person name="Nierman W.C."/>
            <person name="Havlak P.H."/>
            <person name="Chen R."/>
            <person name="Durbin K.J."/>
            <person name="Egan A."/>
            <person name="Ren Y."/>
            <person name="Song X.-Z."/>
            <person name="Li B."/>
            <person name="Liu Y."/>
            <person name="Qin X."/>
            <person name="Cawley S."/>
            <person name="Cooney A.J."/>
            <person name="D'Souza L.M."/>
            <person name="Martin K."/>
            <person name="Wu J.Q."/>
            <person name="Gonzalez-Garay M.L."/>
            <person name="Jackson A.R."/>
            <person name="Kalafus K.J."/>
            <person name="McLeod M.P."/>
            <person name="Milosavljevic A."/>
            <person name="Virk D."/>
            <person name="Volkov A."/>
            <person name="Wheeler D.A."/>
            <person name="Zhang Z."/>
            <person name="Bailey J.A."/>
            <person name="Eichler E.E."/>
            <person name="Tuzun E."/>
            <person name="Birney E."/>
            <person name="Mongin E."/>
            <person name="Ureta-Vidal A."/>
            <person name="Woodwark C."/>
            <person name="Zdobnov E."/>
            <person name="Bork P."/>
            <person name="Suyama M."/>
            <person name="Torrents D."/>
            <person name="Alexandersson M."/>
            <person name="Trask B.J."/>
            <person name="Young J.M."/>
            <person name="Huang H."/>
            <person name="Wang H."/>
            <person name="Xing H."/>
            <person name="Daniels S."/>
            <person name="Gietzen D."/>
            <person name="Schmidt J."/>
            <person name="Stevens K."/>
            <person name="Vitt U."/>
            <person name="Wingrove J."/>
            <person name="Camara F."/>
            <person name="Mar Alba M."/>
            <person name="Abril J.F."/>
            <person name="Guigo R."/>
            <person name="Smit A."/>
            <person name="Dubchak I."/>
            <person name="Rubin E.M."/>
            <person name="Couronne O."/>
            <person name="Poliakov A."/>
            <person name="Huebner N."/>
            <person name="Ganten D."/>
            <person name="Goesele C."/>
            <person name="Hummel O."/>
            <person name="Kreitler T."/>
            <person name="Lee Y.-A."/>
            <person name="Monti J."/>
            <person name="Schulz H."/>
            <person name="Zimdahl H."/>
            <person name="Himmelbauer H."/>
            <person name="Lehrach H."/>
            <person name="Jacob H.J."/>
            <person name="Bromberg S."/>
            <person name="Gullings-Handley J."/>
            <person name="Jensen-Seaman M.I."/>
            <person name="Kwitek A.E."/>
            <person name="Lazar J."/>
            <person name="Pasko D."/>
            <person name="Tonellato P.J."/>
            <person name="Twigger S."/>
            <person name="Ponting C.P."/>
            <person name="Duarte J.M."/>
            <person name="Rice S."/>
            <person name="Goodstadt L."/>
            <person name="Beatson S.A."/>
            <person name="Emes R.D."/>
            <person name="Winter E.E."/>
            <person name="Webber C."/>
            <person name="Brandt P."/>
            <person name="Nyakatura G."/>
            <person name="Adetobi M."/>
            <person name="Chiaromonte F."/>
            <person name="Elnitski L."/>
            <person name="Eswara P."/>
            <person name="Hardison R.C."/>
            <person name="Hou M."/>
            <person name="Kolbe D."/>
            <person name="Makova K."/>
            <person name="Miller W."/>
            <person name="Nekrutenko A."/>
            <person name="Riemer C."/>
            <person name="Schwartz S."/>
            <person name="Taylor J."/>
            <person name="Yang S."/>
            <person name="Zhang Y."/>
            <person name="Lindpaintner K."/>
            <person name="Andrews T.D."/>
            <person name="Caccamo M."/>
            <person name="Clamp M."/>
            <person name="Clarke L."/>
            <person name="Curwen V."/>
            <person name="Durbin R.M."/>
            <person name="Eyras E."/>
            <person name="Searle S.M."/>
            <person name="Cooper G.M."/>
            <person name="Batzoglou S."/>
            <person name="Brudno M."/>
            <person name="Sidow A."/>
            <person name="Stone E.A."/>
            <person name="Payseur B.A."/>
            <person name="Bourque G."/>
            <person name="Lopez-Otin C."/>
            <person name="Puente X.S."/>
            <person name="Chakrabarti K."/>
            <person name="Chatterji S."/>
            <person name="Dewey C."/>
            <person name="Pachter L."/>
            <person name="Bray N."/>
            <person name="Yap V.B."/>
            <person name="Caspi A."/>
            <person name="Tesler G."/>
            <person name="Pevzner P.A."/>
            <person name="Haussler D."/>
            <person name="Roskin K.M."/>
            <person name="Baertsch R."/>
            <person name="Clawson H."/>
            <person name="Furey T.S."/>
            <person name="Hinrichs A.S."/>
            <person name="Karolchik D."/>
            <person name="Kent W.J."/>
            <person name="Rosenbloom K.R."/>
            <person name="Trumbower H."/>
            <person name="Weirauch M."/>
            <person name="Cooper D.N."/>
            <person name="Stenson P.D."/>
            <person name="Ma B."/>
            <person name="Brent M."/>
            <person name="Arumugam M."/>
            <person name="Shteynberg D."/>
            <person name="Copley R.R."/>
            <person name="Taylor M.S."/>
            <person name="Riethman H."/>
            <person name="Mudunuri U."/>
            <person name="Peterson J."/>
            <person name="Guyer M."/>
            <person name="Felsenfeld A."/>
            <person name="Old S."/>
            <person name="Mockrin S."/>
            <person name="Collins F.S."/>
        </authorList>
    </citation>
    <scope>NUCLEOTIDE SEQUENCE [LARGE SCALE GENOMIC DNA]</scope>
    <source>
        <strain>Brown Norway</strain>
    </source>
</reference>
<reference key="4">
    <citation type="journal article" date="1994" name="Mutagenesis">
        <title>Activation of benzylic alcohols to mutagens by human hepatic sulphotransferases.</title>
        <authorList>
            <person name="Glatt H."/>
            <person name="Seidel A."/>
            <person name="Harvey R.G."/>
            <person name="Coughtrie M.W."/>
        </authorList>
    </citation>
    <scope>CATALYTIC ACTIVITY</scope>
    <scope>FUNCTION</scope>
</reference>
<dbReference type="EC" id="2.8.2.2" evidence="1"/>
<dbReference type="EC" id="2.8.2.14" evidence="1"/>
<dbReference type="EMBL" id="M31363">
    <property type="protein sequence ID" value="AAA41356.1"/>
    <property type="molecule type" value="mRNA"/>
</dbReference>
<dbReference type="EMBL" id="D14988">
    <property type="protein sequence ID" value="BAA03633.1"/>
    <property type="molecule type" value="mRNA"/>
</dbReference>
<dbReference type="EMBL" id="D14987">
    <property type="protein sequence ID" value="BAA03632.1"/>
    <property type="molecule type" value="mRNA"/>
</dbReference>
<dbReference type="EMBL" id="AABR07002517">
    <property type="status" value="NOT_ANNOTATED_CDS"/>
    <property type="molecule type" value="Genomic_DNA"/>
</dbReference>
<dbReference type="EMBL" id="AABR07002526">
    <property type="status" value="NOT_ANNOTATED_CDS"/>
    <property type="molecule type" value="Genomic_DNA"/>
</dbReference>
<dbReference type="EMBL" id="AABR07002525">
    <property type="status" value="NOT_ANNOTATED_CDS"/>
    <property type="molecule type" value="Genomic_DNA"/>
</dbReference>
<dbReference type="EMBL" id="AABR07002524">
    <property type="status" value="NOT_ANNOTATED_CDS"/>
    <property type="molecule type" value="Genomic_DNA"/>
</dbReference>
<dbReference type="EMBL" id="AABR07002523">
    <property type="status" value="NOT_ANNOTATED_CDS"/>
    <property type="molecule type" value="Genomic_DNA"/>
</dbReference>
<dbReference type="EMBL" id="AABR07002522">
    <property type="status" value="NOT_ANNOTATED_CDS"/>
    <property type="molecule type" value="Genomic_DNA"/>
</dbReference>
<dbReference type="EMBL" id="AABR07002521">
    <property type="status" value="NOT_ANNOTATED_CDS"/>
    <property type="molecule type" value="Genomic_DNA"/>
</dbReference>
<dbReference type="EMBL" id="AABR07002520">
    <property type="status" value="NOT_ANNOTATED_CDS"/>
    <property type="molecule type" value="Genomic_DNA"/>
</dbReference>
<dbReference type="EMBL" id="AABR07002519">
    <property type="status" value="NOT_ANNOTATED_CDS"/>
    <property type="molecule type" value="Genomic_DNA"/>
</dbReference>
<dbReference type="EMBL" id="AABR07002518">
    <property type="status" value="NOT_ANNOTATED_CDS"/>
    <property type="molecule type" value="Genomic_DNA"/>
</dbReference>
<dbReference type="PIR" id="A33569">
    <property type="entry name" value="A33569"/>
</dbReference>
<dbReference type="PIR" id="I52849">
    <property type="entry name" value="I52849"/>
</dbReference>
<dbReference type="RefSeq" id="NP_571978.1">
    <property type="nucleotide sequence ID" value="NM_131903.1"/>
</dbReference>
<dbReference type="RefSeq" id="XP_008757114.1">
    <property type="nucleotide sequence ID" value="XM_008758892.2"/>
</dbReference>
<dbReference type="SMR" id="P15709"/>
<dbReference type="FunCoup" id="P15709">
    <property type="interactions" value="57"/>
</dbReference>
<dbReference type="BindingDB" id="P15709"/>
<dbReference type="ChEMBL" id="CHEMBL3007"/>
<dbReference type="iPTMnet" id="P15709"/>
<dbReference type="PhosphoSitePlus" id="P15709"/>
<dbReference type="PaxDb" id="10116-ENSRNOP00000043445"/>
<dbReference type="GeneID" id="24912"/>
<dbReference type="KEGG" id="rno:24912"/>
<dbReference type="UCSC" id="RGD:621337">
    <property type="organism name" value="rat"/>
</dbReference>
<dbReference type="AGR" id="RGD:621337"/>
<dbReference type="CTD" id="6822"/>
<dbReference type="RGD" id="621337">
    <property type="gene designation" value="Sult2a1"/>
</dbReference>
<dbReference type="eggNOG" id="KOG1584">
    <property type="taxonomic scope" value="Eukaryota"/>
</dbReference>
<dbReference type="InParanoid" id="P15709"/>
<dbReference type="OrthoDB" id="43838at9989"/>
<dbReference type="PhylomeDB" id="P15709"/>
<dbReference type="Reactome" id="R-RNO-156584">
    <property type="pathway name" value="Cytosolic sulfonation of small molecules"/>
</dbReference>
<dbReference type="Reactome" id="R-RNO-9753281">
    <property type="pathway name" value="Paracetamol ADME"/>
</dbReference>
<dbReference type="PRO" id="PR:P15709"/>
<dbReference type="Proteomes" id="UP000002494">
    <property type="component" value="Chromosome 1"/>
</dbReference>
<dbReference type="Bgee" id="ENSRNOG00000047986">
    <property type="expression patterns" value="Expressed in liver and 16 other cell types or tissues"/>
</dbReference>
<dbReference type="GO" id="GO:0005737">
    <property type="term" value="C:cytoplasm"/>
    <property type="evidence" value="ECO:0000314"/>
    <property type="project" value="UniProtKB"/>
</dbReference>
<dbReference type="GO" id="GO:0050656">
    <property type="term" value="F:3'-phosphoadenosine 5'-phosphosulfate binding"/>
    <property type="evidence" value="ECO:0000314"/>
    <property type="project" value="RGD"/>
</dbReference>
<dbReference type="GO" id="GO:0004027">
    <property type="term" value="F:alcohol sulfotransferase activity"/>
    <property type="evidence" value="ECO:0000314"/>
    <property type="project" value="RGD"/>
</dbReference>
<dbReference type="GO" id="GO:0047704">
    <property type="term" value="F:bile-salt sulfotransferase activity"/>
    <property type="evidence" value="ECO:0000250"/>
    <property type="project" value="UniProtKB"/>
</dbReference>
<dbReference type="GO" id="GO:0050294">
    <property type="term" value="F:steroid sulfotransferase activity"/>
    <property type="evidence" value="ECO:0000250"/>
    <property type="project" value="UniProtKB"/>
</dbReference>
<dbReference type="GO" id="GO:0008146">
    <property type="term" value="F:sulfotransferase activity"/>
    <property type="evidence" value="ECO:0000314"/>
    <property type="project" value="RGD"/>
</dbReference>
<dbReference type="GO" id="GO:0016740">
    <property type="term" value="F:transferase activity"/>
    <property type="evidence" value="ECO:0000314"/>
    <property type="project" value="RGD"/>
</dbReference>
<dbReference type="GO" id="GO:0050427">
    <property type="term" value="P:3'-phosphoadenosine 5'-phosphosulfate metabolic process"/>
    <property type="evidence" value="ECO:0000266"/>
    <property type="project" value="RGD"/>
</dbReference>
<dbReference type="GO" id="GO:0071305">
    <property type="term" value="P:cellular response to vitamin D"/>
    <property type="evidence" value="ECO:0000314"/>
    <property type="project" value="RGD"/>
</dbReference>
<dbReference type="GO" id="GO:0008203">
    <property type="term" value="P:cholesterol metabolic process"/>
    <property type="evidence" value="ECO:0000250"/>
    <property type="project" value="UniProtKB"/>
</dbReference>
<dbReference type="GO" id="GO:0006068">
    <property type="term" value="P:ethanol catabolic process"/>
    <property type="evidence" value="ECO:0000266"/>
    <property type="project" value="RGD"/>
</dbReference>
<dbReference type="GO" id="GO:0014823">
    <property type="term" value="P:response to activity"/>
    <property type="evidence" value="ECO:0000270"/>
    <property type="project" value="RGD"/>
</dbReference>
<dbReference type="GO" id="GO:0017085">
    <property type="term" value="P:response to insecticide"/>
    <property type="evidence" value="ECO:0000270"/>
    <property type="project" value="RGD"/>
</dbReference>
<dbReference type="GO" id="GO:0031667">
    <property type="term" value="P:response to nutrient levels"/>
    <property type="evidence" value="ECO:0000270"/>
    <property type="project" value="RGD"/>
</dbReference>
<dbReference type="GO" id="GO:0008202">
    <property type="term" value="P:steroid metabolic process"/>
    <property type="evidence" value="ECO:0000314"/>
    <property type="project" value="RGD"/>
</dbReference>
<dbReference type="GO" id="GO:0051923">
    <property type="term" value="P:sulfation"/>
    <property type="evidence" value="ECO:0000314"/>
    <property type="project" value="RGD"/>
</dbReference>
<dbReference type="GO" id="GO:0042403">
    <property type="term" value="P:thyroid hormone metabolic process"/>
    <property type="evidence" value="ECO:0000266"/>
    <property type="project" value="RGD"/>
</dbReference>
<dbReference type="GO" id="GO:0006805">
    <property type="term" value="P:xenobiotic metabolic process"/>
    <property type="evidence" value="ECO:0000314"/>
    <property type="project" value="RGD"/>
</dbReference>
<dbReference type="FunFam" id="3.40.50.300:FF:000433">
    <property type="entry name" value="Estrogen sulfotransferase"/>
    <property type="match status" value="1"/>
</dbReference>
<dbReference type="Gene3D" id="3.40.50.300">
    <property type="entry name" value="P-loop containing nucleotide triphosphate hydrolases"/>
    <property type="match status" value="1"/>
</dbReference>
<dbReference type="InterPro" id="IPR027417">
    <property type="entry name" value="P-loop_NTPase"/>
</dbReference>
<dbReference type="InterPro" id="IPR000863">
    <property type="entry name" value="Sulfotransferase_dom"/>
</dbReference>
<dbReference type="PANTHER" id="PTHR11783">
    <property type="entry name" value="SULFOTRANSFERASE SULT"/>
    <property type="match status" value="1"/>
</dbReference>
<dbReference type="Pfam" id="PF00685">
    <property type="entry name" value="Sulfotransfer_1"/>
    <property type="match status" value="1"/>
</dbReference>
<dbReference type="SUPFAM" id="SSF52540">
    <property type="entry name" value="P-loop containing nucleoside triphosphate hydrolases"/>
    <property type="match status" value="1"/>
</dbReference>